<sequence>MVLTNSKQPRKQRKALYNAPLHLRNSVMAAMLSKELKEKFNKNSLPVKKGDTVKVLRGNFKGIEGEVSKVDYAGYKIIVEGVVNKKQDGTETAYPIHPSNVMITKLDESDEKRFKNSSN</sequence>
<comment type="function">
    <text evidence="1">One of two assembly initiator proteins, it binds directly to the 5'-end of the 23S rRNA, where it nucleates assembly of the 50S subunit.</text>
</comment>
<comment type="function">
    <text evidence="1">Located at the polypeptide exit tunnel on the outside of the subunit.</text>
</comment>
<comment type="subunit">
    <text evidence="1">Part of the 50S ribosomal subunit.</text>
</comment>
<comment type="similarity">
    <text evidence="1">Belongs to the universal ribosomal protein uL24 family.</text>
</comment>
<evidence type="ECO:0000255" key="1">
    <source>
        <dbReference type="HAMAP-Rule" id="MF_01326"/>
    </source>
</evidence>
<evidence type="ECO:0000305" key="2"/>
<keyword id="KW-0687">Ribonucleoprotein</keyword>
<keyword id="KW-0689">Ribosomal protein</keyword>
<keyword id="KW-0694">RNA-binding</keyword>
<keyword id="KW-0699">rRNA-binding</keyword>
<reference key="1">
    <citation type="submission" date="2007-06" db="EMBL/GenBank/DDBJ databases">
        <title>Complete sequence of Methanococcus maripaludis C7.</title>
        <authorList>
            <consortium name="US DOE Joint Genome Institute"/>
            <person name="Copeland A."/>
            <person name="Lucas S."/>
            <person name="Lapidus A."/>
            <person name="Barry K."/>
            <person name="Glavina del Rio T."/>
            <person name="Dalin E."/>
            <person name="Tice H."/>
            <person name="Pitluck S."/>
            <person name="Clum A."/>
            <person name="Schmutz J."/>
            <person name="Larimer F."/>
            <person name="Land M."/>
            <person name="Hauser L."/>
            <person name="Kyrpides N."/>
            <person name="Anderson I."/>
            <person name="Sieprawska-Lupa M."/>
            <person name="Whitman W.B."/>
            <person name="Richardson P."/>
        </authorList>
    </citation>
    <scope>NUCLEOTIDE SEQUENCE [LARGE SCALE GENOMIC DNA]</scope>
    <source>
        <strain>C7 / ATCC BAA-1331</strain>
    </source>
</reference>
<gene>
    <name evidence="1" type="primary">rpl24</name>
    <name type="ordered locus">MmarC7_0655</name>
</gene>
<dbReference type="EMBL" id="CP000745">
    <property type="protein sequence ID" value="ABR65722.1"/>
    <property type="molecule type" value="Genomic_DNA"/>
</dbReference>
<dbReference type="SMR" id="A6VGZ6"/>
<dbReference type="STRING" id="426368.MmarC7_0655"/>
<dbReference type="KEGG" id="mmz:MmarC7_0655"/>
<dbReference type="eggNOG" id="arCOG04094">
    <property type="taxonomic scope" value="Archaea"/>
</dbReference>
<dbReference type="HOGENOM" id="CLU_093240_2_1_2"/>
<dbReference type="OrthoDB" id="10899at2157"/>
<dbReference type="GO" id="GO:0015934">
    <property type="term" value="C:large ribosomal subunit"/>
    <property type="evidence" value="ECO:0007669"/>
    <property type="project" value="InterPro"/>
</dbReference>
<dbReference type="GO" id="GO:0019843">
    <property type="term" value="F:rRNA binding"/>
    <property type="evidence" value="ECO:0007669"/>
    <property type="project" value="UniProtKB-UniRule"/>
</dbReference>
<dbReference type="GO" id="GO:0003735">
    <property type="term" value="F:structural constituent of ribosome"/>
    <property type="evidence" value="ECO:0007669"/>
    <property type="project" value="InterPro"/>
</dbReference>
<dbReference type="GO" id="GO:0006412">
    <property type="term" value="P:translation"/>
    <property type="evidence" value="ECO:0007669"/>
    <property type="project" value="UniProtKB-UniRule"/>
</dbReference>
<dbReference type="CDD" id="cd06089">
    <property type="entry name" value="KOW_RPL26"/>
    <property type="match status" value="1"/>
</dbReference>
<dbReference type="Gene3D" id="2.30.30.30">
    <property type="match status" value="1"/>
</dbReference>
<dbReference type="HAMAP" id="MF_01326_A">
    <property type="entry name" value="Ribosomal_uL24_A"/>
    <property type="match status" value="1"/>
</dbReference>
<dbReference type="InterPro" id="IPR005824">
    <property type="entry name" value="KOW"/>
</dbReference>
<dbReference type="InterPro" id="IPR014722">
    <property type="entry name" value="Rib_uL2_dom2"/>
</dbReference>
<dbReference type="InterPro" id="IPR005825">
    <property type="entry name" value="Ribosomal_uL24_CS"/>
</dbReference>
<dbReference type="InterPro" id="IPR005756">
    <property type="entry name" value="Ribosomal_uL24_euk/arc"/>
</dbReference>
<dbReference type="InterPro" id="IPR041988">
    <property type="entry name" value="Ribosomal_uL24_KOW"/>
</dbReference>
<dbReference type="InterPro" id="IPR008991">
    <property type="entry name" value="Translation_prot_SH3-like_sf"/>
</dbReference>
<dbReference type="NCBIfam" id="TIGR01080">
    <property type="entry name" value="rplX_A_E"/>
    <property type="match status" value="1"/>
</dbReference>
<dbReference type="PANTHER" id="PTHR11143">
    <property type="entry name" value="60S RIBOSOMAL PROTEIN L26 FAMILY MEMBER"/>
    <property type="match status" value="1"/>
</dbReference>
<dbReference type="Pfam" id="PF00467">
    <property type="entry name" value="KOW"/>
    <property type="match status" value="1"/>
</dbReference>
<dbReference type="Pfam" id="PF16906">
    <property type="entry name" value="Ribosomal_L26"/>
    <property type="match status" value="1"/>
</dbReference>
<dbReference type="SMART" id="SM00739">
    <property type="entry name" value="KOW"/>
    <property type="match status" value="1"/>
</dbReference>
<dbReference type="SUPFAM" id="SSF50104">
    <property type="entry name" value="Translation proteins SH3-like domain"/>
    <property type="match status" value="1"/>
</dbReference>
<dbReference type="PROSITE" id="PS01108">
    <property type="entry name" value="RIBOSOMAL_L24"/>
    <property type="match status" value="1"/>
</dbReference>
<organism>
    <name type="scientific">Methanococcus maripaludis (strain C7 / ATCC BAA-1331)</name>
    <dbReference type="NCBI Taxonomy" id="426368"/>
    <lineage>
        <taxon>Archaea</taxon>
        <taxon>Methanobacteriati</taxon>
        <taxon>Methanobacteriota</taxon>
        <taxon>Methanomada group</taxon>
        <taxon>Methanococci</taxon>
        <taxon>Methanococcales</taxon>
        <taxon>Methanococcaceae</taxon>
        <taxon>Methanococcus</taxon>
    </lineage>
</organism>
<accession>A6VGZ6</accession>
<protein>
    <recommendedName>
        <fullName evidence="1">Large ribosomal subunit protein uL24</fullName>
    </recommendedName>
    <alternativeName>
        <fullName evidence="2">50S ribosomal protein L24</fullName>
    </alternativeName>
</protein>
<feature type="chain" id="PRO_1000052252" description="Large ribosomal subunit protein uL24">
    <location>
        <begin position="1"/>
        <end position="119"/>
    </location>
</feature>
<name>RL24_METM7</name>
<proteinExistence type="inferred from homology"/>